<reference key="1">
    <citation type="journal article" date="2008" name="Appl. Environ. Microbiol.">
        <title>The genome sequence of the metal-mobilizing, extremely thermoacidophilic archaeon Metallosphaera sedula provides insights into bioleaching-associated metabolism.</title>
        <authorList>
            <person name="Auernik K.S."/>
            <person name="Maezato Y."/>
            <person name="Blum P.H."/>
            <person name="Kelly R.M."/>
        </authorList>
    </citation>
    <scope>NUCLEOTIDE SEQUENCE [LARGE SCALE GENOMIC DNA]</scope>
    <source>
        <strain>ATCC 51363 / DSM 5348 / JCM 9185 / NBRC 15509 / TH2</strain>
    </source>
</reference>
<dbReference type="EMBL" id="CP000682">
    <property type="protein sequence ID" value="ABP94910.1"/>
    <property type="molecule type" value="Genomic_DNA"/>
</dbReference>
<dbReference type="RefSeq" id="WP_012020697.1">
    <property type="nucleotide sequence ID" value="NC_009440.1"/>
</dbReference>
<dbReference type="SMR" id="A4YEQ8"/>
<dbReference type="STRING" id="399549.Msed_0735"/>
<dbReference type="GeneID" id="91755189"/>
<dbReference type="KEGG" id="mse:Msed_0735"/>
<dbReference type="eggNOG" id="arCOG04272">
    <property type="taxonomic scope" value="Archaea"/>
</dbReference>
<dbReference type="HOGENOM" id="CLU_053134_0_0_2"/>
<dbReference type="Proteomes" id="UP000000242">
    <property type="component" value="Chromosome"/>
</dbReference>
<dbReference type="GO" id="GO:0008939">
    <property type="term" value="F:nicotinate-nucleotide-dimethylbenzimidazole phosphoribosyltransferase activity"/>
    <property type="evidence" value="ECO:0007669"/>
    <property type="project" value="InterPro"/>
</dbReference>
<dbReference type="CDD" id="cd02439">
    <property type="entry name" value="DMB-PRT_CobT"/>
    <property type="match status" value="1"/>
</dbReference>
<dbReference type="Gene3D" id="3.40.50.10210">
    <property type="match status" value="1"/>
</dbReference>
<dbReference type="HAMAP" id="MF_01086">
    <property type="entry name" value="UPF0284"/>
    <property type="match status" value="1"/>
</dbReference>
<dbReference type="InterPro" id="IPR003200">
    <property type="entry name" value="Nict_dMeBzImd_PRibTrfase"/>
</dbReference>
<dbReference type="InterPro" id="IPR002805">
    <property type="entry name" value="Nict_dMeBzImd_PRibTrfase_arc"/>
</dbReference>
<dbReference type="InterPro" id="IPR036087">
    <property type="entry name" value="Nict_dMeBzImd_PRibTrfase_sf"/>
</dbReference>
<dbReference type="NCBIfam" id="TIGR00303">
    <property type="entry name" value="nicotinate mononucleotide-dependent phosphoribosyltransferase CobT"/>
    <property type="match status" value="1"/>
</dbReference>
<dbReference type="NCBIfam" id="NF003368">
    <property type="entry name" value="PRK04447.1-1"/>
    <property type="match status" value="1"/>
</dbReference>
<dbReference type="NCBIfam" id="NF003372">
    <property type="entry name" value="PRK04447.1-5"/>
    <property type="match status" value="1"/>
</dbReference>
<dbReference type="PANTHER" id="PTHR38811">
    <property type="match status" value="1"/>
</dbReference>
<dbReference type="PANTHER" id="PTHR38811:SF1">
    <property type="entry name" value="UPF0284 PROTEIN SLL1500"/>
    <property type="match status" value="1"/>
</dbReference>
<dbReference type="SUPFAM" id="SSF52733">
    <property type="entry name" value="Nicotinate mononucleotide:5,6-dimethylbenzimidazole phosphoribosyltransferase (CobT)"/>
    <property type="match status" value="1"/>
</dbReference>
<evidence type="ECO:0000255" key="1">
    <source>
        <dbReference type="HAMAP-Rule" id="MF_01086"/>
    </source>
</evidence>
<proteinExistence type="inferred from homology"/>
<keyword id="KW-1185">Reference proteome</keyword>
<comment type="similarity">
    <text evidence="1">Belongs to the UPF0284 family.</text>
</comment>
<accession>A4YEQ8</accession>
<protein>
    <recommendedName>
        <fullName evidence="1">UPF0284 protein Msed_0735</fullName>
    </recommendedName>
</protein>
<organism>
    <name type="scientific">Metallosphaera sedula (strain ATCC 51363 / DSM 5348 / JCM 9185 / NBRC 15509 / TH2)</name>
    <dbReference type="NCBI Taxonomy" id="399549"/>
    <lineage>
        <taxon>Archaea</taxon>
        <taxon>Thermoproteota</taxon>
        <taxon>Thermoprotei</taxon>
        <taxon>Sulfolobales</taxon>
        <taxon>Sulfolobaceae</taxon>
        <taxon>Metallosphaera</taxon>
    </lineage>
</organism>
<sequence>MIVDHIGNLSDALKGKKSTFALVIGTTDVSLIPGITVAGATPELTMFTPAADAEYLITGSCKVIKGVPVTPDGIPTPALLSRASLSLINVNKLVVNAGARVTPKIPFVDLHGEPGRDIRKGGVRKEVAENIIANATVLGENLSEEVLVVGESIPAGTTTAAAVLTGLGFNGVEIVSSSSPNNPKELKRKVVEEAVRSAPRDTTERIYWLADPVILAVAGLAMGFRGLTILAGGTQMAAVSAVIKELSPEKLNSVGIITTKWIINDTTARLMELVKTLGVKLSHANLDLSQSQHEGLRVYERGFVKEGVGAGGAMALAMANGVTSENLVKKIDAFYSDLINAQR</sequence>
<name>Y735_METS5</name>
<gene>
    <name type="ordered locus">Msed_0735</name>
</gene>
<feature type="chain" id="PRO_1000149869" description="UPF0284 protein Msed_0735">
    <location>
        <begin position="1"/>
        <end position="343"/>
    </location>
</feature>